<dbReference type="EC" id="4.2.1.40"/>
<dbReference type="EMBL" id="CR543861">
    <property type="protein sequence ID" value="CAG67105.1"/>
    <property type="molecule type" value="Genomic_DNA"/>
</dbReference>
<dbReference type="RefSeq" id="WP_004930680.1">
    <property type="nucleotide sequence ID" value="NC_005966.1"/>
</dbReference>
<dbReference type="SMR" id="Q6FFQ2"/>
<dbReference type="STRING" id="202950.GCA_001485005_01866"/>
<dbReference type="GeneID" id="45232650"/>
<dbReference type="KEGG" id="aci:ACIAD0128"/>
<dbReference type="eggNOG" id="COG4948">
    <property type="taxonomic scope" value="Bacteria"/>
</dbReference>
<dbReference type="HOGENOM" id="CLU_030273_9_0_6"/>
<dbReference type="OrthoDB" id="193563at2"/>
<dbReference type="BioCyc" id="ASP62977:ACIAD_RS00600-MONOMER"/>
<dbReference type="BioCyc" id="MetaCyc:MONOMER-15624"/>
<dbReference type="BRENDA" id="4.2.1.40">
    <property type="organism ID" value="8909"/>
</dbReference>
<dbReference type="SABIO-RK" id="Q6FFQ2"/>
<dbReference type="UniPathway" id="UPA00564">
    <property type="reaction ID" value="UER00627"/>
</dbReference>
<dbReference type="Proteomes" id="UP000000430">
    <property type="component" value="Chromosome"/>
</dbReference>
<dbReference type="GO" id="GO:0008872">
    <property type="term" value="F:glucarate dehydratase activity"/>
    <property type="evidence" value="ECO:0007669"/>
    <property type="project" value="UniProtKB-EC"/>
</dbReference>
<dbReference type="GO" id="GO:0000287">
    <property type="term" value="F:magnesium ion binding"/>
    <property type="evidence" value="ECO:0007669"/>
    <property type="project" value="InterPro"/>
</dbReference>
<dbReference type="GO" id="GO:0042838">
    <property type="term" value="P:D-glucarate catabolic process"/>
    <property type="evidence" value="ECO:0007669"/>
    <property type="project" value="UniProtKB-UniPathway"/>
</dbReference>
<dbReference type="CDD" id="cd03323">
    <property type="entry name" value="D-glucarate_dehydratase"/>
    <property type="match status" value="1"/>
</dbReference>
<dbReference type="Gene3D" id="3.20.20.120">
    <property type="entry name" value="Enolase-like C-terminal domain"/>
    <property type="match status" value="1"/>
</dbReference>
<dbReference type="Gene3D" id="3.30.390.10">
    <property type="entry name" value="Enolase-like, N-terminal domain"/>
    <property type="match status" value="1"/>
</dbReference>
<dbReference type="InterPro" id="IPR034593">
    <property type="entry name" value="DgoD-like"/>
</dbReference>
<dbReference type="InterPro" id="IPR036849">
    <property type="entry name" value="Enolase-like_C_sf"/>
</dbReference>
<dbReference type="InterPro" id="IPR029017">
    <property type="entry name" value="Enolase-like_N"/>
</dbReference>
<dbReference type="InterPro" id="IPR029065">
    <property type="entry name" value="Enolase_C-like"/>
</dbReference>
<dbReference type="InterPro" id="IPR017653">
    <property type="entry name" value="Glucarate_dehydratase"/>
</dbReference>
<dbReference type="InterPro" id="IPR034598">
    <property type="entry name" value="GlucD-like"/>
</dbReference>
<dbReference type="InterPro" id="IPR013342">
    <property type="entry name" value="Mandelate_racemase_C"/>
</dbReference>
<dbReference type="NCBIfam" id="TIGR03247">
    <property type="entry name" value="glucar-dehydr"/>
    <property type="match status" value="1"/>
</dbReference>
<dbReference type="PANTHER" id="PTHR48080">
    <property type="entry name" value="D-GALACTONATE DEHYDRATASE-RELATED"/>
    <property type="match status" value="1"/>
</dbReference>
<dbReference type="PANTHER" id="PTHR48080:SF4">
    <property type="entry name" value="GLUCARATE DEHYDRATASE"/>
    <property type="match status" value="1"/>
</dbReference>
<dbReference type="Pfam" id="PF13378">
    <property type="entry name" value="MR_MLE_C"/>
    <property type="match status" value="1"/>
</dbReference>
<dbReference type="SFLD" id="SFLDF00005">
    <property type="entry name" value="glucarate_dehydratase"/>
    <property type="match status" value="1"/>
</dbReference>
<dbReference type="SFLD" id="SFLDG00055">
    <property type="entry name" value="glucarate_dehydratase"/>
    <property type="match status" value="1"/>
</dbReference>
<dbReference type="SMART" id="SM00922">
    <property type="entry name" value="MR_MLE"/>
    <property type="match status" value="1"/>
</dbReference>
<dbReference type="SUPFAM" id="SSF51604">
    <property type="entry name" value="Enolase C-terminal domain-like"/>
    <property type="match status" value="1"/>
</dbReference>
<dbReference type="SUPFAM" id="SSF54826">
    <property type="entry name" value="Enolase N-terminal domain-like"/>
    <property type="match status" value="1"/>
</dbReference>
<accession>Q6FFQ2</accession>
<gene>
    <name type="primary">gudD</name>
    <name type="ordered locus">ACIAD0128</name>
</gene>
<feature type="chain" id="PRO_0000424017" description="Glucarate dehydratase">
    <location>
        <begin position="1"/>
        <end position="444"/>
    </location>
</feature>
<feature type="active site" description="Proton acceptor" evidence="1">
    <location>
        <position position="205"/>
    </location>
</feature>
<feature type="active site" description="Proton acceptor" evidence="1">
    <location>
        <position position="337"/>
    </location>
</feature>
<feature type="binding site" evidence="1">
    <location>
        <position position="30"/>
    </location>
    <ligand>
        <name>substrate</name>
    </ligand>
</feature>
<feature type="binding site" evidence="1">
    <location>
        <position position="101"/>
    </location>
    <ligand>
        <name>substrate</name>
    </ligand>
</feature>
<feature type="binding site" evidence="1">
    <location>
        <position position="148"/>
    </location>
    <ligand>
        <name>substrate</name>
    </ligand>
</feature>
<feature type="binding site" evidence="1">
    <location>
        <position position="203"/>
    </location>
    <ligand>
        <name>substrate</name>
    </ligand>
</feature>
<feature type="binding site" evidence="1">
    <location>
        <begin position="233"/>
        <end position="235"/>
    </location>
    <ligand>
        <name>substrate</name>
    </ligand>
</feature>
<feature type="binding site" evidence="1">
    <location>
        <position position="233"/>
    </location>
    <ligand>
        <name>Mg(2+)</name>
        <dbReference type="ChEBI" id="CHEBI:18420"/>
    </ligand>
</feature>
<feature type="binding site" evidence="1">
    <location>
        <position position="264"/>
    </location>
    <ligand>
        <name>Mg(2+)</name>
        <dbReference type="ChEBI" id="CHEBI:18420"/>
    </ligand>
</feature>
<feature type="binding site" evidence="1">
    <location>
        <position position="287"/>
    </location>
    <ligand>
        <name>Mg(2+)</name>
        <dbReference type="ChEBI" id="CHEBI:18420"/>
    </ligand>
</feature>
<feature type="binding site" evidence="1">
    <location>
        <position position="287"/>
    </location>
    <ligand>
        <name>substrate</name>
    </ligand>
</feature>
<feature type="binding site" evidence="1">
    <location>
        <begin position="337"/>
        <end position="339"/>
    </location>
    <ligand>
        <name>substrate</name>
    </ligand>
</feature>
<feature type="binding site" evidence="1">
    <location>
        <position position="366"/>
    </location>
    <ligand>
        <name>substrate</name>
    </ligand>
</feature>
<feature type="binding site" evidence="1">
    <location>
        <position position="420"/>
    </location>
    <ligand>
        <name>substrate</name>
    </ligand>
</feature>
<comment type="function">
    <text evidence="2">Catalyzes the dehydration of glucarate to 5-keto-4-deoxy-D-glucarate (5-kdGluc).</text>
</comment>
<comment type="catalytic activity">
    <reaction evidence="2">
        <text>D-glucarate = 5-dehydro-4-deoxy-D-glucarate + H2O</text>
        <dbReference type="Rhea" id="RHEA:14573"/>
        <dbReference type="ChEBI" id="CHEBI:15377"/>
        <dbReference type="ChEBI" id="CHEBI:30612"/>
        <dbReference type="ChEBI" id="CHEBI:42819"/>
        <dbReference type="EC" id="4.2.1.40"/>
    </reaction>
</comment>
<comment type="cofactor">
    <cofactor evidence="1">
        <name>Mg(2+)</name>
        <dbReference type="ChEBI" id="CHEBI:18420"/>
    </cofactor>
</comment>
<comment type="pathway">
    <text evidence="2">Carbohydrate acid metabolism; D-glucarate degradation; 2,5-dioxopentanoate from D-glucarate: step 1/2.</text>
</comment>
<comment type="similarity">
    <text evidence="3">Belongs to the mandelate racemase/muconate lactonizing enzyme family. GlucD subfamily.</text>
</comment>
<protein>
    <recommendedName>
        <fullName>Glucarate dehydratase</fullName>
        <shortName>GDH</shortName>
        <shortName>GlucD</shortName>
        <ecNumber>4.2.1.40</ecNumber>
    </recommendedName>
</protein>
<sequence>MAASTPIIQSVRAIPVAGHDSMLLNLSGAHAPYFTRNLLVIEDNSGNIGVGEIPGGEKILATLNDAKSLILGQPIGEYKNLLKKIHQTFADRDSGGRGNQTFDLRTTVHVVTAYESALLDLLGKHLNVNVASLLGDGQQRDEVEVLGYLFFIGDRKQTSLDYATSTHLNHDWYQVRHEKALTPEAIQRLAEASYDRYGFKDFKLKGGVLHGEQEAEAVTAIARRFPDARVTLDPNGAWYLDEAIGLGKHLKGVLAYAEDPCGAEQGYSSREIMAEFKRATGLPTATNMIATDWREMSHSIQLQAVDIPLADPHFWTLEGSVRVSQLCNMYNLTWGSHSNNHFDVSLAMFTHVAAAAVGNVTAIDTHWIWQEGTDHLTKQPLEIKGGKIQVPSVPGLGVELDWDNINRAHELYKAKGLGARNDADAMQFMVPNWKFDHKKPCLVR</sequence>
<proteinExistence type="evidence at protein level"/>
<evidence type="ECO:0000250" key="1"/>
<evidence type="ECO:0000269" key="2">
    <source>
    </source>
</evidence>
<evidence type="ECO:0000305" key="3"/>
<name>GUDD_ACIAD</name>
<organism>
    <name type="scientific">Acinetobacter baylyi (strain ATCC 33305 / BD413 / ADP1)</name>
    <dbReference type="NCBI Taxonomy" id="62977"/>
    <lineage>
        <taxon>Bacteria</taxon>
        <taxon>Pseudomonadati</taxon>
        <taxon>Pseudomonadota</taxon>
        <taxon>Gammaproteobacteria</taxon>
        <taxon>Moraxellales</taxon>
        <taxon>Moraxellaceae</taxon>
        <taxon>Acinetobacter</taxon>
    </lineage>
</organism>
<reference key="1">
    <citation type="journal article" date="2004" name="Nucleic Acids Res.">
        <title>Unique features revealed by the genome sequence of Acinetobacter sp. ADP1, a versatile and naturally transformation competent bacterium.</title>
        <authorList>
            <person name="Barbe V."/>
            <person name="Vallenet D."/>
            <person name="Fonknechten N."/>
            <person name="Kreimeyer A."/>
            <person name="Oztas S."/>
            <person name="Labarre L."/>
            <person name="Cruveiller S."/>
            <person name="Robert C."/>
            <person name="Duprat S."/>
            <person name="Wincker P."/>
            <person name="Ornston L.N."/>
            <person name="Weissenbach J."/>
            <person name="Marliere P."/>
            <person name="Cohen G.N."/>
            <person name="Medigue C."/>
        </authorList>
    </citation>
    <scope>NUCLEOTIDE SEQUENCE [LARGE SCALE GENOMIC DNA]</scope>
    <source>
        <strain>ATCC 33305 / BD413 / ADP1</strain>
    </source>
</reference>
<reference key="2">
    <citation type="journal article" date="2008" name="J. Biol. Chem.">
        <title>New insights into the alternative D-glucarate degradation pathway.</title>
        <authorList>
            <person name="Aghaie A."/>
            <person name="Lechaplais C."/>
            <person name="Sirven P."/>
            <person name="Tricot S."/>
            <person name="Besnard-Gonnet M."/>
            <person name="Muselet D."/>
            <person name="de Berardinis V."/>
            <person name="Kreimeyer A."/>
            <person name="Gyapay G."/>
            <person name="Salanoubat M."/>
            <person name="Perret A."/>
        </authorList>
    </citation>
    <scope>FUNCTION</scope>
    <scope>PATHWAY</scope>
    <scope>CATALYTIC ACTIVITY</scope>
    <source>
        <strain>ATCC 33305 / BD413 / ADP1</strain>
    </source>
</reference>
<keyword id="KW-0456">Lyase</keyword>
<keyword id="KW-0460">Magnesium</keyword>
<keyword id="KW-0479">Metal-binding</keyword>